<protein>
    <recommendedName>
        <fullName evidence="1">Succinylglutamate desuccinylase</fullName>
        <ecNumber evidence="1">3.5.1.96</ecNumber>
    </recommendedName>
</protein>
<dbReference type="EC" id="3.5.1.96" evidence="1"/>
<dbReference type="EMBL" id="CP000438">
    <property type="protein sequence ID" value="ABJ10061.1"/>
    <property type="molecule type" value="Genomic_DNA"/>
</dbReference>
<dbReference type="RefSeq" id="WP_003085962.1">
    <property type="nucleotide sequence ID" value="NZ_CP034244.1"/>
</dbReference>
<dbReference type="SMR" id="Q02I61"/>
<dbReference type="KEGG" id="pau:PA14_52630"/>
<dbReference type="PseudoCAP" id="PA14_52630"/>
<dbReference type="HOGENOM" id="CLU_071608_0_0_6"/>
<dbReference type="BioCyc" id="PAER208963:G1G74-4429-MONOMER"/>
<dbReference type="UniPathway" id="UPA00185">
    <property type="reaction ID" value="UER00283"/>
</dbReference>
<dbReference type="Proteomes" id="UP000000653">
    <property type="component" value="Chromosome"/>
</dbReference>
<dbReference type="GO" id="GO:0016788">
    <property type="term" value="F:hydrolase activity, acting on ester bonds"/>
    <property type="evidence" value="ECO:0007669"/>
    <property type="project" value="UniProtKB-UniRule"/>
</dbReference>
<dbReference type="GO" id="GO:0009017">
    <property type="term" value="F:succinylglutamate desuccinylase activity"/>
    <property type="evidence" value="ECO:0007669"/>
    <property type="project" value="UniProtKB-EC"/>
</dbReference>
<dbReference type="GO" id="GO:0008270">
    <property type="term" value="F:zinc ion binding"/>
    <property type="evidence" value="ECO:0007669"/>
    <property type="project" value="UniProtKB-UniRule"/>
</dbReference>
<dbReference type="GO" id="GO:0019544">
    <property type="term" value="P:arginine catabolic process to glutamate"/>
    <property type="evidence" value="ECO:0007669"/>
    <property type="project" value="UniProtKB-UniRule"/>
</dbReference>
<dbReference type="GO" id="GO:0019545">
    <property type="term" value="P:arginine catabolic process to succinate"/>
    <property type="evidence" value="ECO:0007669"/>
    <property type="project" value="UniProtKB-UniRule"/>
</dbReference>
<dbReference type="CDD" id="cd03855">
    <property type="entry name" value="M14_ASTE"/>
    <property type="match status" value="1"/>
</dbReference>
<dbReference type="FunFam" id="3.40.630.10:FF:000017">
    <property type="entry name" value="Succinylglutamate desuccinylase"/>
    <property type="match status" value="1"/>
</dbReference>
<dbReference type="Gene3D" id="3.40.630.10">
    <property type="entry name" value="Zn peptidases"/>
    <property type="match status" value="1"/>
</dbReference>
<dbReference type="HAMAP" id="MF_00767">
    <property type="entry name" value="Arg_catab_AstE"/>
    <property type="match status" value="1"/>
</dbReference>
<dbReference type="InterPro" id="IPR050178">
    <property type="entry name" value="AspA/AstE_fam"/>
</dbReference>
<dbReference type="InterPro" id="IPR055438">
    <property type="entry name" value="AstE_AspA_cat"/>
</dbReference>
<dbReference type="InterPro" id="IPR007036">
    <property type="entry name" value="Aste_AspA_hybrid_dom"/>
</dbReference>
<dbReference type="InterPro" id="IPR016681">
    <property type="entry name" value="SuccinylGlu_desuccinylase"/>
</dbReference>
<dbReference type="NCBIfam" id="TIGR03242">
    <property type="entry name" value="arg_catab_astE"/>
    <property type="match status" value="1"/>
</dbReference>
<dbReference type="NCBIfam" id="NF003706">
    <property type="entry name" value="PRK05324.1"/>
    <property type="match status" value="1"/>
</dbReference>
<dbReference type="PANTHER" id="PTHR15162">
    <property type="entry name" value="ASPARTOACYLASE"/>
    <property type="match status" value="1"/>
</dbReference>
<dbReference type="PANTHER" id="PTHR15162:SF7">
    <property type="entry name" value="SUCCINYLGLUTAMATE DESUCCINYLASE"/>
    <property type="match status" value="1"/>
</dbReference>
<dbReference type="Pfam" id="PF24827">
    <property type="entry name" value="AstE_AspA_cat"/>
    <property type="match status" value="1"/>
</dbReference>
<dbReference type="Pfam" id="PF04952">
    <property type="entry name" value="AstE_AspA_hybrid"/>
    <property type="match status" value="1"/>
</dbReference>
<dbReference type="PIRSF" id="PIRSF017020">
    <property type="entry name" value="AstE"/>
    <property type="match status" value="1"/>
</dbReference>
<dbReference type="SUPFAM" id="SSF53187">
    <property type="entry name" value="Zn-dependent exopeptidases"/>
    <property type="match status" value="1"/>
</dbReference>
<sequence length="332" mass="36924">MLALGKLLDLTLAGREPTEKIQLTADGTRLHWLAEGALEVTPIGARDNGVDLLLSAGIHGNETAPIELLERLIRKVAAGTLKPAARVLFLFGNPEAIRRGERYVEQDMNRLFNGRHEEGSGNEAFRAAELERLAQVFFSKTERVHLHYDLHTAIRGSKIEQFALYPWAEGREHSRSELARLRDAGIEAVLLQNKPGITFSAYTYGQLGAEAFTLELGKARPFGENQEVNLERLERSLELLIDGSEEQPDGSRLDGLKLFSVSREVIKHSDHFRLHLDDDVANFTELSPGYLLAEDIGGTRWVVEEVGARIIFPNPRVKNGLRAGILVVPAKL</sequence>
<evidence type="ECO:0000255" key="1">
    <source>
        <dbReference type="HAMAP-Rule" id="MF_00767"/>
    </source>
</evidence>
<feature type="chain" id="PRO_1000017324" description="Succinylglutamate desuccinylase">
    <location>
        <begin position="1"/>
        <end position="332"/>
    </location>
</feature>
<feature type="active site" evidence="1">
    <location>
        <position position="215"/>
    </location>
</feature>
<feature type="binding site" evidence="1">
    <location>
        <position position="59"/>
    </location>
    <ligand>
        <name>Zn(2+)</name>
        <dbReference type="ChEBI" id="CHEBI:29105"/>
    </ligand>
</feature>
<feature type="binding site" evidence="1">
    <location>
        <position position="62"/>
    </location>
    <ligand>
        <name>Zn(2+)</name>
        <dbReference type="ChEBI" id="CHEBI:29105"/>
    </ligand>
</feature>
<feature type="binding site" evidence="1">
    <location>
        <position position="151"/>
    </location>
    <ligand>
        <name>Zn(2+)</name>
        <dbReference type="ChEBI" id="CHEBI:29105"/>
    </ligand>
</feature>
<keyword id="KW-0056">Arginine metabolism</keyword>
<keyword id="KW-0378">Hydrolase</keyword>
<keyword id="KW-0479">Metal-binding</keyword>
<keyword id="KW-0862">Zinc</keyword>
<reference key="1">
    <citation type="journal article" date="2006" name="Genome Biol.">
        <title>Genomic analysis reveals that Pseudomonas aeruginosa virulence is combinatorial.</title>
        <authorList>
            <person name="Lee D.G."/>
            <person name="Urbach J.M."/>
            <person name="Wu G."/>
            <person name="Liberati N.T."/>
            <person name="Feinbaum R.L."/>
            <person name="Miyata S."/>
            <person name="Diggins L.T."/>
            <person name="He J."/>
            <person name="Saucier M."/>
            <person name="Deziel E."/>
            <person name="Friedman L."/>
            <person name="Li L."/>
            <person name="Grills G."/>
            <person name="Montgomery K."/>
            <person name="Kucherlapati R."/>
            <person name="Rahme L.G."/>
            <person name="Ausubel F.M."/>
        </authorList>
    </citation>
    <scope>NUCLEOTIDE SEQUENCE [LARGE SCALE GENOMIC DNA]</scope>
    <source>
        <strain>UCBPP-PA14</strain>
    </source>
</reference>
<organism>
    <name type="scientific">Pseudomonas aeruginosa (strain UCBPP-PA14)</name>
    <dbReference type="NCBI Taxonomy" id="208963"/>
    <lineage>
        <taxon>Bacteria</taxon>
        <taxon>Pseudomonadati</taxon>
        <taxon>Pseudomonadota</taxon>
        <taxon>Gammaproteobacteria</taxon>
        <taxon>Pseudomonadales</taxon>
        <taxon>Pseudomonadaceae</taxon>
        <taxon>Pseudomonas</taxon>
    </lineage>
</organism>
<comment type="function">
    <text evidence="1">Transforms N(2)-succinylglutamate into succinate and glutamate.</text>
</comment>
<comment type="catalytic activity">
    <reaction evidence="1">
        <text>N-succinyl-L-glutamate + H2O = L-glutamate + succinate</text>
        <dbReference type="Rhea" id="RHEA:15169"/>
        <dbReference type="ChEBI" id="CHEBI:15377"/>
        <dbReference type="ChEBI" id="CHEBI:29985"/>
        <dbReference type="ChEBI" id="CHEBI:30031"/>
        <dbReference type="ChEBI" id="CHEBI:58763"/>
        <dbReference type="EC" id="3.5.1.96"/>
    </reaction>
</comment>
<comment type="cofactor">
    <cofactor evidence="1">
        <name>Zn(2+)</name>
        <dbReference type="ChEBI" id="CHEBI:29105"/>
    </cofactor>
    <text evidence="1">Binds 1 zinc ion per subunit.</text>
</comment>
<comment type="pathway">
    <text evidence="1">Amino-acid degradation; L-arginine degradation via AST pathway; L-glutamate and succinate from L-arginine: step 5/5.</text>
</comment>
<comment type="similarity">
    <text evidence="1">Belongs to the AspA/AstE family. Succinylglutamate desuccinylase subfamily.</text>
</comment>
<name>ASTE_PSEAB</name>
<accession>Q02I61</accession>
<proteinExistence type="inferred from homology"/>
<gene>
    <name evidence="1" type="primary">astE</name>
    <name type="ordered locus">PA14_52630</name>
</gene>